<evidence type="ECO:0000255" key="1">
    <source>
        <dbReference type="HAMAP-Rule" id="MF_00405"/>
    </source>
</evidence>
<feature type="chain" id="PRO_1000201204" description="3-hydroxydecanoyl-[acyl-carrier-protein] dehydratase">
    <location>
        <begin position="1"/>
        <end position="172"/>
    </location>
</feature>
<feature type="active site" evidence="1">
    <location>
        <position position="71"/>
    </location>
</feature>
<gene>
    <name evidence="1" type="primary">fabA</name>
    <name type="ordered locus">SSPA1656</name>
</gene>
<dbReference type="EC" id="4.2.1.59" evidence="1"/>
<dbReference type="EC" id="5.3.3.14" evidence="1"/>
<dbReference type="EMBL" id="FM200053">
    <property type="protein sequence ID" value="CAR59848.1"/>
    <property type="molecule type" value="Genomic_DNA"/>
</dbReference>
<dbReference type="RefSeq" id="WP_000227928.1">
    <property type="nucleotide sequence ID" value="NC_011147.1"/>
</dbReference>
<dbReference type="SMR" id="B5BBL3"/>
<dbReference type="KEGG" id="sek:SSPA1656"/>
<dbReference type="HOGENOM" id="CLU_097925_0_0_6"/>
<dbReference type="UniPathway" id="UPA00094"/>
<dbReference type="Proteomes" id="UP000001869">
    <property type="component" value="Chromosome"/>
</dbReference>
<dbReference type="GO" id="GO:0005737">
    <property type="term" value="C:cytoplasm"/>
    <property type="evidence" value="ECO:0007669"/>
    <property type="project" value="UniProtKB-SubCell"/>
</dbReference>
<dbReference type="GO" id="GO:0019171">
    <property type="term" value="F:(3R)-hydroxyacyl-[acyl-carrier-protein] dehydratase activity"/>
    <property type="evidence" value="ECO:0007669"/>
    <property type="project" value="UniProtKB-UniRule"/>
</dbReference>
<dbReference type="GO" id="GO:0034017">
    <property type="term" value="F:trans-2-decenoyl-acyl-carrier-protein isomerase activity"/>
    <property type="evidence" value="ECO:0007669"/>
    <property type="project" value="UniProtKB-UniRule"/>
</dbReference>
<dbReference type="GO" id="GO:0006636">
    <property type="term" value="P:unsaturated fatty acid biosynthetic process"/>
    <property type="evidence" value="ECO:0007669"/>
    <property type="project" value="UniProtKB-UniRule"/>
</dbReference>
<dbReference type="CDD" id="cd01287">
    <property type="entry name" value="FabA"/>
    <property type="match status" value="1"/>
</dbReference>
<dbReference type="FunFam" id="3.10.129.10:FF:000003">
    <property type="entry name" value="3-hydroxydecanoyl-[acyl-carrier-protein] dehydratase"/>
    <property type="match status" value="1"/>
</dbReference>
<dbReference type="Gene3D" id="3.10.129.10">
    <property type="entry name" value="Hotdog Thioesterase"/>
    <property type="match status" value="1"/>
</dbReference>
<dbReference type="HAMAP" id="MF_00405">
    <property type="entry name" value="FabA"/>
    <property type="match status" value="1"/>
</dbReference>
<dbReference type="InterPro" id="IPR010083">
    <property type="entry name" value="FabA"/>
</dbReference>
<dbReference type="InterPro" id="IPR013114">
    <property type="entry name" value="FabA_FabZ"/>
</dbReference>
<dbReference type="InterPro" id="IPR029069">
    <property type="entry name" value="HotDog_dom_sf"/>
</dbReference>
<dbReference type="NCBIfam" id="TIGR01749">
    <property type="entry name" value="fabA"/>
    <property type="match status" value="1"/>
</dbReference>
<dbReference type="NCBIfam" id="NF003509">
    <property type="entry name" value="PRK05174.1"/>
    <property type="match status" value="1"/>
</dbReference>
<dbReference type="PANTHER" id="PTHR30272">
    <property type="entry name" value="3-HYDROXYACYL-[ACYL-CARRIER-PROTEIN] DEHYDRATASE"/>
    <property type="match status" value="1"/>
</dbReference>
<dbReference type="PANTHER" id="PTHR30272:SF8">
    <property type="entry name" value="3-HYDROXYDECANOYL-[ACYL-CARRIER-PROTEIN] DEHYDRATASE"/>
    <property type="match status" value="1"/>
</dbReference>
<dbReference type="Pfam" id="PF07977">
    <property type="entry name" value="FabA"/>
    <property type="match status" value="1"/>
</dbReference>
<dbReference type="SUPFAM" id="SSF54637">
    <property type="entry name" value="Thioesterase/thiol ester dehydrase-isomerase"/>
    <property type="match status" value="1"/>
</dbReference>
<keyword id="KW-0963">Cytoplasm</keyword>
<keyword id="KW-0275">Fatty acid biosynthesis</keyword>
<keyword id="KW-0276">Fatty acid metabolism</keyword>
<keyword id="KW-0413">Isomerase</keyword>
<keyword id="KW-0444">Lipid biosynthesis</keyword>
<keyword id="KW-0443">Lipid metabolism</keyword>
<keyword id="KW-0456">Lyase</keyword>
<protein>
    <recommendedName>
        <fullName evidence="1">3-hydroxydecanoyl-[acyl-carrier-protein] dehydratase</fullName>
        <ecNumber evidence="1">4.2.1.59</ecNumber>
    </recommendedName>
    <alternativeName>
        <fullName evidence="1">3-hydroxyacyl-[acyl-carrier-protein] dehydratase FabA</fullName>
    </alternativeName>
    <alternativeName>
        <fullName evidence="1">Beta-hydroxydecanoyl thioester dehydrase</fullName>
    </alternativeName>
    <alternativeName>
        <fullName evidence="1">Trans-2-decenoyl-[acyl-carrier-protein] isomerase</fullName>
        <ecNumber evidence="1">5.3.3.14</ecNumber>
    </alternativeName>
</protein>
<accession>B5BBL3</accession>
<comment type="function">
    <text evidence="1">Necessary for the introduction of cis unsaturation into fatty acids. Catalyzes the dehydration of (3R)-3-hydroxydecanoyl-ACP to E-(2)-decenoyl-ACP and then its isomerization to Z-(3)-decenoyl-ACP. Can catalyze the dehydratase reaction for beta-hydroxyacyl-ACPs with saturated chain lengths up to 16:0, being most active on intermediate chain length.</text>
</comment>
<comment type="catalytic activity">
    <reaction evidence="1">
        <text>a (3R)-hydroxyacyl-[ACP] = a (2E)-enoyl-[ACP] + H2O</text>
        <dbReference type="Rhea" id="RHEA:13097"/>
        <dbReference type="Rhea" id="RHEA-COMP:9925"/>
        <dbReference type="Rhea" id="RHEA-COMP:9945"/>
        <dbReference type="ChEBI" id="CHEBI:15377"/>
        <dbReference type="ChEBI" id="CHEBI:78784"/>
        <dbReference type="ChEBI" id="CHEBI:78827"/>
        <dbReference type="EC" id="4.2.1.59"/>
    </reaction>
</comment>
<comment type="catalytic activity">
    <reaction evidence="1">
        <text>(3R)-hydroxydecanoyl-[ACP] = (2E)-decenoyl-[ACP] + H2O</text>
        <dbReference type="Rhea" id="RHEA:41860"/>
        <dbReference type="Rhea" id="RHEA-COMP:9638"/>
        <dbReference type="Rhea" id="RHEA-COMP:9639"/>
        <dbReference type="ChEBI" id="CHEBI:15377"/>
        <dbReference type="ChEBI" id="CHEBI:78466"/>
        <dbReference type="ChEBI" id="CHEBI:78467"/>
    </reaction>
</comment>
<comment type="catalytic activity">
    <reaction evidence="1">
        <text>(2E)-decenoyl-[ACP] = (3Z)-decenoyl-[ACP]</text>
        <dbReference type="Rhea" id="RHEA:23568"/>
        <dbReference type="Rhea" id="RHEA-COMP:9639"/>
        <dbReference type="Rhea" id="RHEA-COMP:9927"/>
        <dbReference type="ChEBI" id="CHEBI:78467"/>
        <dbReference type="ChEBI" id="CHEBI:78798"/>
        <dbReference type="EC" id="5.3.3.14"/>
    </reaction>
</comment>
<comment type="pathway">
    <text evidence="1">Lipid metabolism; fatty acid biosynthesis.</text>
</comment>
<comment type="subunit">
    <text evidence="1">Homodimer.</text>
</comment>
<comment type="subcellular location">
    <subcellularLocation>
        <location evidence="1">Cytoplasm</location>
    </subcellularLocation>
</comment>
<comment type="similarity">
    <text evidence="1">Belongs to the thioester dehydratase family. FabA subfamily.</text>
</comment>
<organism>
    <name type="scientific">Salmonella paratyphi A (strain AKU_12601)</name>
    <dbReference type="NCBI Taxonomy" id="554290"/>
    <lineage>
        <taxon>Bacteria</taxon>
        <taxon>Pseudomonadati</taxon>
        <taxon>Pseudomonadota</taxon>
        <taxon>Gammaproteobacteria</taxon>
        <taxon>Enterobacterales</taxon>
        <taxon>Enterobacteriaceae</taxon>
        <taxon>Salmonella</taxon>
    </lineage>
</organism>
<proteinExistence type="inferred from homology"/>
<reference key="1">
    <citation type="journal article" date="2009" name="BMC Genomics">
        <title>Pseudogene accumulation in the evolutionary histories of Salmonella enterica serovars Paratyphi A and Typhi.</title>
        <authorList>
            <person name="Holt K.E."/>
            <person name="Thomson N.R."/>
            <person name="Wain J."/>
            <person name="Langridge G.C."/>
            <person name="Hasan R."/>
            <person name="Bhutta Z.A."/>
            <person name="Quail M.A."/>
            <person name="Norbertczak H."/>
            <person name="Walker D."/>
            <person name="Simmonds M."/>
            <person name="White B."/>
            <person name="Bason N."/>
            <person name="Mungall K."/>
            <person name="Dougan G."/>
            <person name="Parkhill J."/>
        </authorList>
    </citation>
    <scope>NUCLEOTIDE SEQUENCE [LARGE SCALE GENOMIC DNA]</scope>
    <source>
        <strain>AKU_12601</strain>
    </source>
</reference>
<sequence length="172" mass="19047">MVDKRESYTKEDLLASGRGELFGAKGPQLPAPNMLMMDRVVKMTETGGNFDKGYVEAELDINPDLWFFGCHFIGDPVMPGCLGLDAMWQLVGFYLGWLGGEGKGRALGVGEVKFTGQVLPTARKVTYRIHFKRIVNRRLIMGLADGEVLVDGRLIYTAHDLKVGLFQDTSAF</sequence>
<name>FABA_SALPK</name>